<keyword id="KW-1015">Disulfide bond</keyword>
<keyword id="KW-0255">Endonuclease</keyword>
<keyword id="KW-0256">Endoplasmic reticulum</keyword>
<keyword id="KW-0325">Glycoprotein</keyword>
<keyword id="KW-0378">Hydrolase</keyword>
<keyword id="KW-0540">Nuclease</keyword>
<keyword id="KW-1185">Reference proteome</keyword>
<keyword id="KW-0732">Signal</keyword>
<organism>
    <name type="scientific">Bos taurus</name>
    <name type="common">Bovine</name>
    <dbReference type="NCBI Taxonomy" id="9913"/>
    <lineage>
        <taxon>Eukaryota</taxon>
        <taxon>Metazoa</taxon>
        <taxon>Chordata</taxon>
        <taxon>Craniata</taxon>
        <taxon>Vertebrata</taxon>
        <taxon>Euteleostomi</taxon>
        <taxon>Mammalia</taxon>
        <taxon>Eutheria</taxon>
        <taxon>Laurasiatheria</taxon>
        <taxon>Artiodactyla</taxon>
        <taxon>Ruminantia</taxon>
        <taxon>Pecora</taxon>
        <taxon>Bovidae</taxon>
        <taxon>Bovinae</taxon>
        <taxon>Bos</taxon>
    </lineage>
</organism>
<accession>Q2QDE9</accession>
<comment type="subcellular location">
    <subcellularLocation>
        <location evidence="1">Endoplasmic reticulum</location>
    </subcellularLocation>
</comment>
<comment type="similarity">
    <text evidence="3">Belongs to the DNase I family.</text>
</comment>
<proteinExistence type="evidence at transcript level"/>
<evidence type="ECO:0000250" key="1"/>
<evidence type="ECO:0000255" key="2"/>
<evidence type="ECO:0000305" key="3"/>
<sequence length="316" mass="35168">MHSSGGFQKAIHGHALLLLLLLASGAETFRICAFNAQRLTLAKVAREPVLDTLVKILARCDIMVLQEVVDSSDTAIPLLLRELNRFGDSGPYASHSSLLLGRSTYKEKYVYLYRSHEAEVRDSYMYDDQDDLFTREPFVCWFSLRSKVLPSLVLVPLHTTPKAVETELNALYDVFLDASGRWQTKDVILLGDFNADCTSLTKKRLDDLVLRTQAGFHWAIADGVDTTVRASTHCTYDRIVLHGELLQSLLRGAAAFDFPQSFGLTEQEALNISDHYPVEVDLALSWAVHGVQPPCLATLWLSLLLPLLAPQLGLVA</sequence>
<feature type="signal peptide" evidence="2">
    <location>
        <begin position="1"/>
        <end position="28"/>
    </location>
</feature>
<feature type="chain" id="PRO_0000231030" description="Deoxyribonuclease-1-like 1">
    <location>
        <begin position="29"/>
        <end position="316"/>
    </location>
</feature>
<feature type="active site" evidence="1">
    <location>
        <position position="107"/>
    </location>
</feature>
<feature type="active site" evidence="1">
    <location>
        <position position="158"/>
    </location>
</feature>
<feature type="glycosylation site" description="N-linked (GlcNAc...) asparagine" evidence="2">
    <location>
        <position position="271"/>
    </location>
</feature>
<feature type="disulfide bond" description="Essential for enzymatic activity" evidence="1">
    <location>
        <begin position="197"/>
        <end position="234"/>
    </location>
</feature>
<dbReference type="EC" id="3.1.21.-"/>
<dbReference type="EMBL" id="DQ116783">
    <property type="protein sequence ID" value="AAZ94276.1"/>
    <property type="molecule type" value="mRNA"/>
</dbReference>
<dbReference type="RefSeq" id="NP_001033723.1">
    <property type="nucleotide sequence ID" value="NM_001038634.1"/>
</dbReference>
<dbReference type="SMR" id="Q2QDE9"/>
<dbReference type="FunCoup" id="Q2QDE9">
    <property type="interactions" value="276"/>
</dbReference>
<dbReference type="STRING" id="9913.ENSBTAP00000009806"/>
<dbReference type="GlyCosmos" id="Q2QDE9">
    <property type="glycosylation" value="1 site, No reported glycans"/>
</dbReference>
<dbReference type="GlyGen" id="Q2QDE9">
    <property type="glycosylation" value="1 site"/>
</dbReference>
<dbReference type="PaxDb" id="9913-ENSBTAP00000009806"/>
<dbReference type="GeneID" id="515176"/>
<dbReference type="KEGG" id="bta:515176"/>
<dbReference type="CTD" id="1774"/>
<dbReference type="eggNOG" id="ENOG502QPNY">
    <property type="taxonomic scope" value="Eukaryota"/>
</dbReference>
<dbReference type="InParanoid" id="Q2QDE9"/>
<dbReference type="OrthoDB" id="10061407at2759"/>
<dbReference type="Proteomes" id="UP000009136">
    <property type="component" value="Unplaced"/>
</dbReference>
<dbReference type="GO" id="GO:0005783">
    <property type="term" value="C:endoplasmic reticulum"/>
    <property type="evidence" value="ECO:0007669"/>
    <property type="project" value="UniProtKB-SubCell"/>
</dbReference>
<dbReference type="GO" id="GO:0005634">
    <property type="term" value="C:nucleus"/>
    <property type="evidence" value="ECO:0000318"/>
    <property type="project" value="GO_Central"/>
</dbReference>
<dbReference type="GO" id="GO:0004530">
    <property type="term" value="F:deoxyribonuclease I activity"/>
    <property type="evidence" value="ECO:0000318"/>
    <property type="project" value="GO_Central"/>
</dbReference>
<dbReference type="GO" id="GO:0003677">
    <property type="term" value="F:DNA binding"/>
    <property type="evidence" value="ECO:0000318"/>
    <property type="project" value="GO_Central"/>
</dbReference>
<dbReference type="GO" id="GO:0006308">
    <property type="term" value="P:DNA catabolic process"/>
    <property type="evidence" value="ECO:0000318"/>
    <property type="project" value="GO_Central"/>
</dbReference>
<dbReference type="CDD" id="cd10282">
    <property type="entry name" value="DNase1"/>
    <property type="match status" value="1"/>
</dbReference>
<dbReference type="Gene3D" id="3.60.10.10">
    <property type="entry name" value="Endonuclease/exonuclease/phosphatase"/>
    <property type="match status" value="1"/>
</dbReference>
<dbReference type="InterPro" id="IPR018057">
    <property type="entry name" value="Deoxyribonuclease-1_AS"/>
</dbReference>
<dbReference type="InterPro" id="IPR016202">
    <property type="entry name" value="DNase_I"/>
</dbReference>
<dbReference type="InterPro" id="IPR036691">
    <property type="entry name" value="Endo/exonu/phosph_ase_sf"/>
</dbReference>
<dbReference type="InterPro" id="IPR005135">
    <property type="entry name" value="Endo/exonuclease/phosphatase"/>
</dbReference>
<dbReference type="PANTHER" id="PTHR11371">
    <property type="entry name" value="DEOXYRIBONUCLEASE"/>
    <property type="match status" value="1"/>
</dbReference>
<dbReference type="PANTHER" id="PTHR11371:SF28">
    <property type="entry name" value="DEOXYRIBONUCLEASE-1-LIKE 1"/>
    <property type="match status" value="1"/>
</dbReference>
<dbReference type="Pfam" id="PF03372">
    <property type="entry name" value="Exo_endo_phos"/>
    <property type="match status" value="1"/>
</dbReference>
<dbReference type="PIRSF" id="PIRSF000988">
    <property type="entry name" value="DNase_I_euk"/>
    <property type="match status" value="1"/>
</dbReference>
<dbReference type="PRINTS" id="PR00130">
    <property type="entry name" value="DNASEI"/>
</dbReference>
<dbReference type="SMART" id="SM00476">
    <property type="entry name" value="DNaseIc"/>
    <property type="match status" value="1"/>
</dbReference>
<dbReference type="SUPFAM" id="SSF56219">
    <property type="entry name" value="DNase I-like"/>
    <property type="match status" value="1"/>
</dbReference>
<dbReference type="PROSITE" id="PS00919">
    <property type="entry name" value="DNASE_I_1"/>
    <property type="match status" value="1"/>
</dbReference>
<gene>
    <name type="primary">DNASE1L1</name>
</gene>
<name>DNSL1_BOVIN</name>
<reference key="1">
    <citation type="journal article" date="2005" name="Biochem. J.">
        <title>Physical and biochemical properties of mammalian DNase X proteins: non-AUG translation initiation of porcine and bovine mRNAs for DNase X.</title>
        <authorList>
            <person name="Shiokawa D."/>
            <person name="Shika Y."/>
            <person name="Saito K."/>
            <person name="Yamazaki K."/>
            <person name="Tanuma S."/>
        </authorList>
    </citation>
    <scope>NUCLEOTIDE SEQUENCE [MRNA]</scope>
</reference>
<protein>
    <recommendedName>
        <fullName>Deoxyribonuclease-1-like 1</fullName>
        <ecNumber>3.1.21.-</ecNumber>
    </recommendedName>
    <alternativeName>
        <fullName>DNase X</fullName>
    </alternativeName>
    <alternativeName>
        <fullName>Deoxyribonuclease I-like 1</fullName>
        <shortName>DNase I-like 1</shortName>
    </alternativeName>
</protein>